<sequence>MGNNKKDSNSNYPFASPEGEAGVQLVPKLDTPKMYKVILLNDDYTPMDFVVLVLRRFFAKTEEQATEIMLDVHKKGAGVAGVFSLEIAEMKVMQVNQFAQLNQYPLKSTLEEEA</sequence>
<organism>
    <name type="scientific">Bdellovibrio bacteriovorus (strain ATCC 15356 / DSM 50701 / NCIMB 9529 / HD100)</name>
    <dbReference type="NCBI Taxonomy" id="264462"/>
    <lineage>
        <taxon>Bacteria</taxon>
        <taxon>Pseudomonadati</taxon>
        <taxon>Bdellovibrionota</taxon>
        <taxon>Bdellovibrionia</taxon>
        <taxon>Bdellovibrionales</taxon>
        <taxon>Pseudobdellovibrionaceae</taxon>
        <taxon>Bdellovibrio</taxon>
    </lineage>
</organism>
<keyword id="KW-1185">Reference proteome</keyword>
<dbReference type="EMBL" id="BX842649">
    <property type="protein sequence ID" value="CAE79185.1"/>
    <property type="molecule type" value="Genomic_DNA"/>
</dbReference>
<dbReference type="RefSeq" id="WP_011163787.1">
    <property type="nucleotide sequence ID" value="NC_005363.1"/>
</dbReference>
<dbReference type="SMR" id="Q6MNG7"/>
<dbReference type="STRING" id="264462.Bd1289"/>
<dbReference type="GeneID" id="93012312"/>
<dbReference type="KEGG" id="bba:Bd1289"/>
<dbReference type="eggNOG" id="COG2127">
    <property type="taxonomic scope" value="Bacteria"/>
</dbReference>
<dbReference type="HOGENOM" id="CLU_134358_2_0_7"/>
<dbReference type="Proteomes" id="UP000008080">
    <property type="component" value="Chromosome"/>
</dbReference>
<dbReference type="GO" id="GO:0030163">
    <property type="term" value="P:protein catabolic process"/>
    <property type="evidence" value="ECO:0007669"/>
    <property type="project" value="InterPro"/>
</dbReference>
<dbReference type="GO" id="GO:0006508">
    <property type="term" value="P:proteolysis"/>
    <property type="evidence" value="ECO:0007669"/>
    <property type="project" value="UniProtKB-UniRule"/>
</dbReference>
<dbReference type="FunFam" id="3.30.1390.10:FF:000002">
    <property type="entry name" value="ATP-dependent Clp protease adapter protein ClpS"/>
    <property type="match status" value="1"/>
</dbReference>
<dbReference type="Gene3D" id="3.30.1390.10">
    <property type="match status" value="1"/>
</dbReference>
<dbReference type="HAMAP" id="MF_00302">
    <property type="entry name" value="ClpS"/>
    <property type="match status" value="1"/>
</dbReference>
<dbReference type="InterPro" id="IPR022935">
    <property type="entry name" value="ClpS"/>
</dbReference>
<dbReference type="InterPro" id="IPR003769">
    <property type="entry name" value="ClpS_core"/>
</dbReference>
<dbReference type="InterPro" id="IPR014719">
    <property type="entry name" value="Ribosomal_bL12_C/ClpS-like"/>
</dbReference>
<dbReference type="NCBIfam" id="NF000672">
    <property type="entry name" value="PRK00033.1-5"/>
    <property type="match status" value="1"/>
</dbReference>
<dbReference type="PANTHER" id="PTHR33473:SF19">
    <property type="entry name" value="ATP-DEPENDENT CLP PROTEASE ADAPTER PROTEIN CLPS"/>
    <property type="match status" value="1"/>
</dbReference>
<dbReference type="PANTHER" id="PTHR33473">
    <property type="entry name" value="ATP-DEPENDENT CLP PROTEASE ADAPTER PROTEIN CLPS1, CHLOROPLASTIC"/>
    <property type="match status" value="1"/>
</dbReference>
<dbReference type="Pfam" id="PF02617">
    <property type="entry name" value="ClpS"/>
    <property type="match status" value="1"/>
</dbReference>
<dbReference type="SUPFAM" id="SSF54736">
    <property type="entry name" value="ClpS-like"/>
    <property type="match status" value="1"/>
</dbReference>
<feature type="chain" id="PRO_0000215686" description="ATP-dependent Clp protease adapter protein ClpS">
    <location>
        <begin position="1"/>
        <end position="114"/>
    </location>
</feature>
<name>CLPS_BDEBA</name>
<proteinExistence type="inferred from homology"/>
<evidence type="ECO:0000255" key="1">
    <source>
        <dbReference type="HAMAP-Rule" id="MF_00302"/>
    </source>
</evidence>
<accession>Q6MNG7</accession>
<reference key="1">
    <citation type="journal article" date="2004" name="Science">
        <title>A predator unmasked: life cycle of Bdellovibrio bacteriovorus from a genomic perspective.</title>
        <authorList>
            <person name="Rendulic S."/>
            <person name="Jagtap P."/>
            <person name="Rosinus A."/>
            <person name="Eppinger M."/>
            <person name="Baar C."/>
            <person name="Lanz C."/>
            <person name="Keller H."/>
            <person name="Lambert C."/>
            <person name="Evans K.J."/>
            <person name="Goesmann A."/>
            <person name="Meyer F."/>
            <person name="Sockett R.E."/>
            <person name="Schuster S.C."/>
        </authorList>
    </citation>
    <scope>NUCLEOTIDE SEQUENCE [LARGE SCALE GENOMIC DNA]</scope>
    <source>
        <strain>ATCC 15356 / DSM 50701 / NCIMB 9529 / HD100</strain>
    </source>
</reference>
<protein>
    <recommendedName>
        <fullName evidence="1">ATP-dependent Clp protease adapter protein ClpS</fullName>
    </recommendedName>
</protein>
<gene>
    <name evidence="1" type="primary">clpS</name>
    <name type="ordered locus">Bd1289</name>
</gene>
<comment type="function">
    <text evidence="1">Involved in the modulation of the specificity of the ClpAP-mediated ATP-dependent protein degradation.</text>
</comment>
<comment type="subunit">
    <text evidence="1">Binds to the N-terminal domain of the chaperone ClpA.</text>
</comment>
<comment type="similarity">
    <text evidence="1">Belongs to the ClpS family.</text>
</comment>